<organism>
    <name type="scientific">Escherichia coli (strain K12)</name>
    <dbReference type="NCBI Taxonomy" id="83333"/>
    <lineage>
        <taxon>Bacteria</taxon>
        <taxon>Pseudomonadati</taxon>
        <taxon>Pseudomonadota</taxon>
        <taxon>Gammaproteobacteria</taxon>
        <taxon>Enterobacterales</taxon>
        <taxon>Enterobacteriaceae</taxon>
        <taxon>Escherichia</taxon>
    </lineage>
</organism>
<gene>
    <name type="primary">malQ</name>
    <name type="synonym">malA</name>
    <name type="ordered locus">b3416</name>
    <name type="ordered locus">JW3379</name>
</gene>
<proteinExistence type="evidence at protein level"/>
<dbReference type="EC" id="2.4.1.25"/>
<dbReference type="EMBL" id="M32793">
    <property type="protein sequence ID" value="AAA24106.1"/>
    <property type="molecule type" value="Genomic_DNA"/>
</dbReference>
<dbReference type="EMBL" id="U18997">
    <property type="protein sequence ID" value="AAA58214.1"/>
    <property type="molecule type" value="Genomic_DNA"/>
</dbReference>
<dbReference type="EMBL" id="U00096">
    <property type="protein sequence ID" value="AAC76441.1"/>
    <property type="molecule type" value="Genomic_DNA"/>
</dbReference>
<dbReference type="EMBL" id="AP009048">
    <property type="protein sequence ID" value="BAE77875.1"/>
    <property type="molecule type" value="Genomic_DNA"/>
</dbReference>
<dbReference type="PIR" id="C65137">
    <property type="entry name" value="C65137"/>
</dbReference>
<dbReference type="RefSeq" id="NP_417875.1">
    <property type="nucleotide sequence ID" value="NC_000913.3"/>
</dbReference>
<dbReference type="RefSeq" id="WP_000444342.1">
    <property type="nucleotide sequence ID" value="NZ_LN832404.1"/>
</dbReference>
<dbReference type="PDB" id="4S3P">
    <property type="method" value="X-ray"/>
    <property type="resolution" value="2.80 A"/>
    <property type="chains" value="A/B=1-688"/>
</dbReference>
<dbReference type="PDB" id="4S3Q">
    <property type="method" value="X-ray"/>
    <property type="resolution" value="2.10 A"/>
    <property type="chains" value="A/B/C=1-688"/>
</dbReference>
<dbReference type="PDB" id="4S3R">
    <property type="method" value="X-ray"/>
    <property type="resolution" value="2.10 A"/>
    <property type="chains" value="A=1-688"/>
</dbReference>
<dbReference type="PDBsum" id="4S3P"/>
<dbReference type="PDBsum" id="4S3Q"/>
<dbReference type="PDBsum" id="4S3R"/>
<dbReference type="SMR" id="P15977"/>
<dbReference type="BioGRID" id="4261216">
    <property type="interactions" value="134"/>
</dbReference>
<dbReference type="DIP" id="DIP-10147N"/>
<dbReference type="FunCoup" id="P15977">
    <property type="interactions" value="280"/>
</dbReference>
<dbReference type="IntAct" id="P15977">
    <property type="interactions" value="6"/>
</dbReference>
<dbReference type="STRING" id="511145.b3416"/>
<dbReference type="CAZy" id="GH77">
    <property type="family name" value="Glycoside Hydrolase Family 77"/>
</dbReference>
<dbReference type="jPOST" id="P15977"/>
<dbReference type="PaxDb" id="511145-b3416"/>
<dbReference type="EnsemblBacteria" id="AAC76441">
    <property type="protein sequence ID" value="AAC76441"/>
    <property type="gene ID" value="b3416"/>
</dbReference>
<dbReference type="GeneID" id="947923"/>
<dbReference type="KEGG" id="ecj:JW3379"/>
<dbReference type="KEGG" id="eco:b3416"/>
<dbReference type="KEGG" id="ecoc:C3026_18530"/>
<dbReference type="PATRIC" id="fig|1411691.4.peg.3312"/>
<dbReference type="EchoBASE" id="EB0556"/>
<dbReference type="eggNOG" id="COG1640">
    <property type="taxonomic scope" value="Bacteria"/>
</dbReference>
<dbReference type="HOGENOM" id="CLU_022072_1_1_6"/>
<dbReference type="InParanoid" id="P15977"/>
<dbReference type="OMA" id="QYPNWRL"/>
<dbReference type="OrthoDB" id="9763489at2"/>
<dbReference type="PhylomeDB" id="P15977"/>
<dbReference type="BioCyc" id="EcoCyc:AMYLOMALT-MONOMER"/>
<dbReference type="BioCyc" id="MetaCyc:AMYLOMALT-MONOMER"/>
<dbReference type="BRENDA" id="2.4.1.25">
    <property type="organism ID" value="2026"/>
</dbReference>
<dbReference type="EvolutionaryTrace" id="P15977"/>
<dbReference type="PRO" id="PR:P15977"/>
<dbReference type="Proteomes" id="UP000000625">
    <property type="component" value="Chromosome"/>
</dbReference>
<dbReference type="GO" id="GO:0005829">
    <property type="term" value="C:cytosol"/>
    <property type="evidence" value="ECO:0000314"/>
    <property type="project" value="EcoCyc"/>
</dbReference>
<dbReference type="GO" id="GO:0004134">
    <property type="term" value="F:4-alpha-glucanotransferase activity"/>
    <property type="evidence" value="ECO:0000314"/>
    <property type="project" value="EcoCyc"/>
</dbReference>
<dbReference type="GO" id="GO:0005978">
    <property type="term" value="P:glycogen biosynthetic process"/>
    <property type="evidence" value="ECO:0000269"/>
    <property type="project" value="EcoCyc"/>
</dbReference>
<dbReference type="GO" id="GO:0005980">
    <property type="term" value="P:glycogen catabolic process"/>
    <property type="evidence" value="ECO:0000315"/>
    <property type="project" value="EcoCyc"/>
</dbReference>
<dbReference type="GO" id="GO:0000025">
    <property type="term" value="P:maltose catabolic process"/>
    <property type="evidence" value="ECO:0000314"/>
    <property type="project" value="EcoCyc"/>
</dbReference>
<dbReference type="Gene3D" id="3.20.20.80">
    <property type="entry name" value="Glycosidases"/>
    <property type="match status" value="1"/>
</dbReference>
<dbReference type="InterPro" id="IPR003385">
    <property type="entry name" value="Glyco_hydro_77"/>
</dbReference>
<dbReference type="InterPro" id="IPR017853">
    <property type="entry name" value="Glycoside_hydrolase_SF"/>
</dbReference>
<dbReference type="InterPro" id="IPR048458">
    <property type="entry name" value="MalQ_N"/>
</dbReference>
<dbReference type="NCBIfam" id="TIGR00217">
    <property type="entry name" value="malQ"/>
    <property type="match status" value="1"/>
</dbReference>
<dbReference type="NCBIfam" id="NF008274">
    <property type="entry name" value="PRK11052.1"/>
    <property type="match status" value="1"/>
</dbReference>
<dbReference type="PANTHER" id="PTHR32438">
    <property type="entry name" value="4-ALPHA-GLUCANOTRANSFERASE DPE1, CHLOROPLASTIC/AMYLOPLASTIC"/>
    <property type="match status" value="1"/>
</dbReference>
<dbReference type="PANTHER" id="PTHR32438:SF5">
    <property type="entry name" value="4-ALPHA-GLUCANOTRANSFERASE DPE1, CHLOROPLASTIC_AMYLOPLASTIC"/>
    <property type="match status" value="1"/>
</dbReference>
<dbReference type="Pfam" id="PF02446">
    <property type="entry name" value="Glyco_hydro_77"/>
    <property type="match status" value="1"/>
</dbReference>
<dbReference type="Pfam" id="PF21226">
    <property type="entry name" value="MalQ_N"/>
    <property type="match status" value="1"/>
</dbReference>
<dbReference type="SUPFAM" id="SSF51445">
    <property type="entry name" value="(Trans)glycosidases"/>
    <property type="match status" value="1"/>
</dbReference>
<evidence type="ECO:0000305" key="1"/>
<evidence type="ECO:0007829" key="2">
    <source>
        <dbReference type="PDB" id="4S3P"/>
    </source>
</evidence>
<evidence type="ECO:0007829" key="3">
    <source>
        <dbReference type="PDB" id="4S3Q"/>
    </source>
</evidence>
<protein>
    <recommendedName>
        <fullName>4-alpha-glucanotransferase</fullName>
        <ecNumber>2.4.1.25</ecNumber>
    </recommendedName>
    <alternativeName>
        <fullName>Amylomaltase</fullName>
    </alternativeName>
    <alternativeName>
        <fullName>Disproportionating enzyme</fullName>
        <shortName>D-enzyme</shortName>
    </alternativeName>
</protein>
<sequence>MESKRLDNAALAAGISPNYINAHGKPQSISAETKRRLLDAMHQRTATKVAVTPVPNVMVYTSGKKMPMVVEGSGEYSWLLTTEEGTQYKGHVTGGKAFNLPTKLPEGYHTLTLTQDDQRAHCRVIVAPKRCYEPQALLNKQKLWGACVQLYTLRSEKNWGIGDFGDLKAMLVDVAKRGGSFIGLNPIHALYPANPESASPYSPSSRRWLNVIYIDVNAVEDFHLSEEAQAWWQLPTTQQTLQQARDADWVDYSTVTALKMTALRMAWKGFAQRDDEQMAAFRQFVAEQGDSLFWQAAFDALHAQQVKEDEMRWGWPAWPEMYQNVDSPEVRQFCEEHRDDVDFYLWLQWLAYSQFAACWEISQGYEMPIGLYRDLAVGVAEGGAETWCDRELYCLKASVGAPPDILGPLGQNWGLPPMDPHIITARAYEPFIELLRANMQNCGALRIDHVMSMLRLWWIPYGETADQGAYVHYPVDDLLSILALESKRHRCMVIGEDLGTVPVEIVGKLRSSGVYSYKVLYFENDHEKTFRAPKAYPEQSMAVAATHDLPTLRGYWECGDLTLGKTLGLYPDEVVLRGLYQDRELAKQGLLDALHKYGCLPKRAGHKASLMSMTPTLNRGLQRYIADSNSALLGLQPEDWLDMAEPVNIPGTSYQYKNWRRKLSATLESMFADDGVNKLLKDLDRRRRAAAKKK</sequence>
<feature type="chain" id="PRO_0000170125" description="4-alpha-glucanotransferase">
    <location>
        <begin position="1"/>
        <end position="694"/>
    </location>
</feature>
<feature type="sequence conflict" description="In Ref. 1; AAA24106." evidence="1" ref="1">
    <original>A</original>
    <variation>P</variation>
    <location>
        <position position="22"/>
    </location>
</feature>
<feature type="sequence conflict" description="In Ref. 1; AAA24106." evidence="1" ref="1">
    <original>SP</original>
    <variation>TA</variation>
    <location>
        <begin position="199"/>
        <end position="200"/>
    </location>
</feature>
<feature type="sequence conflict" description="In Ref. 1; AAA24106." evidence="1" ref="1">
    <original>AE</original>
    <variation>GT</variation>
    <location>
        <begin position="380"/>
        <end position="381"/>
    </location>
</feature>
<feature type="sequence conflict" description="In Ref. 1; AAA24106." evidence="1" ref="1">
    <original>G</original>
    <variation>R</variation>
    <location>
        <position position="462"/>
    </location>
</feature>
<feature type="helix" evidence="3">
    <location>
        <begin position="4"/>
        <end position="12"/>
    </location>
</feature>
<feature type="strand" evidence="3">
    <location>
        <begin position="17"/>
        <end position="20"/>
    </location>
</feature>
<feature type="strand" evidence="3">
    <location>
        <begin position="26"/>
        <end position="28"/>
    </location>
</feature>
<feature type="helix" evidence="3">
    <location>
        <begin position="31"/>
        <end position="40"/>
    </location>
</feature>
<feature type="strand" evidence="3">
    <location>
        <begin position="56"/>
        <end position="61"/>
    </location>
</feature>
<feature type="strand" evidence="3">
    <location>
        <begin position="67"/>
        <end position="69"/>
    </location>
</feature>
<feature type="strand" evidence="3">
    <location>
        <begin position="72"/>
        <end position="81"/>
    </location>
</feature>
<feature type="strand" evidence="2">
    <location>
        <begin position="83"/>
        <end position="85"/>
    </location>
</feature>
<feature type="strand" evidence="3">
    <location>
        <begin position="87"/>
        <end position="93"/>
    </location>
</feature>
<feature type="strand" evidence="3">
    <location>
        <begin position="97"/>
        <end position="99"/>
    </location>
</feature>
<feature type="strand" evidence="3">
    <location>
        <begin position="106"/>
        <end position="117"/>
    </location>
</feature>
<feature type="strand" evidence="3">
    <location>
        <begin position="119"/>
        <end position="127"/>
    </location>
</feature>
<feature type="helix" evidence="3">
    <location>
        <begin position="135"/>
        <end position="138"/>
    </location>
</feature>
<feature type="strand" evidence="3">
    <location>
        <begin position="143"/>
        <end position="148"/>
    </location>
</feature>
<feature type="helix" evidence="3">
    <location>
        <begin position="150"/>
        <end position="152"/>
    </location>
</feature>
<feature type="strand" evidence="3">
    <location>
        <begin position="156"/>
        <end position="161"/>
    </location>
</feature>
<feature type="helix" evidence="3">
    <location>
        <begin position="164"/>
        <end position="176"/>
    </location>
</feature>
<feature type="strand" evidence="3">
    <location>
        <begin position="181"/>
        <end position="185"/>
    </location>
</feature>
<feature type="strand" evidence="3">
    <location>
        <begin position="204"/>
        <end position="209"/>
    </location>
</feature>
<feature type="helix" evidence="3">
    <location>
        <begin position="211"/>
        <end position="213"/>
    </location>
</feature>
<feature type="helix" evidence="3">
    <location>
        <begin position="216"/>
        <end position="218"/>
    </location>
</feature>
<feature type="helix" evidence="3">
    <location>
        <begin position="220"/>
        <end position="224"/>
    </location>
</feature>
<feature type="helix" evidence="3">
    <location>
        <begin position="226"/>
        <end position="232"/>
    </location>
</feature>
<feature type="helix" evidence="3">
    <location>
        <begin position="235"/>
        <end position="246"/>
    </location>
</feature>
<feature type="strand" evidence="2">
    <location>
        <begin position="247"/>
        <end position="249"/>
    </location>
</feature>
<feature type="helix" evidence="3">
    <location>
        <begin position="252"/>
        <end position="270"/>
    </location>
</feature>
<feature type="helix" evidence="3">
    <location>
        <begin position="276"/>
        <end position="308"/>
    </location>
</feature>
<feature type="helix" evidence="3">
    <location>
        <begin position="315"/>
        <end position="317"/>
    </location>
</feature>
<feature type="helix" evidence="3">
    <location>
        <begin position="320"/>
        <end position="322"/>
    </location>
</feature>
<feature type="helix" evidence="3">
    <location>
        <begin position="328"/>
        <end position="336"/>
    </location>
</feature>
<feature type="helix" evidence="3">
    <location>
        <begin position="338"/>
        <end position="364"/>
    </location>
</feature>
<feature type="strand" evidence="3">
    <location>
        <begin position="368"/>
        <end position="375"/>
    </location>
</feature>
<feature type="helix" evidence="3">
    <location>
        <begin position="384"/>
        <end position="388"/>
    </location>
</feature>
<feature type="helix" evidence="3">
    <location>
        <begin position="390"/>
        <end position="392"/>
    </location>
</feature>
<feature type="strand" evidence="3">
    <location>
        <begin position="397"/>
        <end position="401"/>
    </location>
</feature>
<feature type="strand" evidence="3">
    <location>
        <begin position="405"/>
        <end position="407"/>
    </location>
</feature>
<feature type="strand" evidence="3">
    <location>
        <begin position="411"/>
        <end position="415"/>
    </location>
</feature>
<feature type="helix" evidence="3">
    <location>
        <begin position="420"/>
        <end position="425"/>
    </location>
</feature>
<feature type="turn" evidence="3">
    <location>
        <begin position="426"/>
        <end position="428"/>
    </location>
</feature>
<feature type="helix" evidence="3">
    <location>
        <begin position="429"/>
        <end position="438"/>
    </location>
</feature>
<feature type="strand" evidence="3">
    <location>
        <begin position="443"/>
        <end position="447"/>
    </location>
</feature>
<feature type="helix" evidence="3">
    <location>
        <begin position="450"/>
        <end position="453"/>
    </location>
</feature>
<feature type="strand" evidence="3">
    <location>
        <begin position="455"/>
        <end position="460"/>
    </location>
</feature>
<feature type="helix" evidence="3">
    <location>
        <begin position="465"/>
        <end position="467"/>
    </location>
</feature>
<feature type="strand" evidence="3">
    <location>
        <begin position="469"/>
        <end position="472"/>
    </location>
</feature>
<feature type="helix" evidence="3">
    <location>
        <begin position="475"/>
        <end position="489"/>
    </location>
</feature>
<feature type="strand" evidence="3">
    <location>
        <begin position="492"/>
        <end position="495"/>
    </location>
</feature>
<feature type="helix" evidence="3">
    <location>
        <begin position="503"/>
        <end position="511"/>
    </location>
</feature>
<feature type="strand" evidence="3">
    <location>
        <begin position="515"/>
        <end position="519"/>
    </location>
</feature>
<feature type="helix" evidence="3">
    <location>
        <begin position="520"/>
        <end position="522"/>
    </location>
</feature>
<feature type="helix" evidence="3">
    <location>
        <begin position="533"/>
        <end position="535"/>
    </location>
</feature>
<feature type="strand" evidence="3">
    <location>
        <begin position="538"/>
        <end position="544"/>
    </location>
</feature>
<feature type="helix" evidence="3">
    <location>
        <begin position="552"/>
        <end position="556"/>
    </location>
</feature>
<feature type="helix" evidence="3">
    <location>
        <begin position="559"/>
        <end position="566"/>
    </location>
</feature>
<feature type="helix" evidence="3">
    <location>
        <begin position="573"/>
        <end position="596"/>
    </location>
</feature>
<feature type="strand" evidence="2">
    <location>
        <begin position="602"/>
        <end position="604"/>
    </location>
</feature>
<feature type="helix" evidence="3">
    <location>
        <begin position="608"/>
        <end position="610"/>
    </location>
</feature>
<feature type="helix" evidence="3">
    <location>
        <begin position="615"/>
        <end position="626"/>
    </location>
</feature>
<feature type="strand" evidence="3">
    <location>
        <begin position="631"/>
        <end position="635"/>
    </location>
</feature>
<feature type="helix" evidence="3">
    <location>
        <begin position="637"/>
        <end position="640"/>
    </location>
</feature>
<feature type="turn" evidence="3">
    <location>
        <begin position="654"/>
        <end position="659"/>
    </location>
</feature>
<feature type="strand" evidence="3">
    <location>
        <begin position="664"/>
        <end position="666"/>
    </location>
</feature>
<feature type="helix" evidence="3">
    <location>
        <begin position="667"/>
        <end position="670"/>
    </location>
</feature>
<feature type="helix" evidence="3">
    <location>
        <begin position="674"/>
        <end position="688"/>
    </location>
</feature>
<keyword id="KW-0002">3D-structure</keyword>
<keyword id="KW-0119">Carbohydrate metabolism</keyword>
<keyword id="KW-0963">Cytoplasm</keyword>
<keyword id="KW-0328">Glycosyltransferase</keyword>
<keyword id="KW-1185">Reference proteome</keyword>
<keyword id="KW-0808">Transferase</keyword>
<reference key="1">
    <citation type="journal article" date="1988" name="Mol. Microbiol.">
        <title>Molecular characterization of malQ, the structural gene for the Escherichia coli enzyme amylomaltase.</title>
        <authorList>
            <person name="Pugsley A.P."/>
            <person name="Dubreuil C."/>
        </authorList>
    </citation>
    <scope>NUCLEOTIDE SEQUENCE [GENOMIC DNA]</scope>
</reference>
<reference key="2">
    <citation type="journal article" date="1997" name="Science">
        <title>The complete genome sequence of Escherichia coli K-12.</title>
        <authorList>
            <person name="Blattner F.R."/>
            <person name="Plunkett G. III"/>
            <person name="Bloch C.A."/>
            <person name="Perna N.T."/>
            <person name="Burland V."/>
            <person name="Riley M."/>
            <person name="Collado-Vides J."/>
            <person name="Glasner J.D."/>
            <person name="Rode C.K."/>
            <person name="Mayhew G.F."/>
            <person name="Gregor J."/>
            <person name="Davis N.W."/>
            <person name="Kirkpatrick H.A."/>
            <person name="Goeden M.A."/>
            <person name="Rose D.J."/>
            <person name="Mau B."/>
            <person name="Shao Y."/>
        </authorList>
    </citation>
    <scope>NUCLEOTIDE SEQUENCE [LARGE SCALE GENOMIC DNA]</scope>
    <source>
        <strain>K12 / MG1655 / ATCC 47076</strain>
    </source>
</reference>
<reference key="3">
    <citation type="journal article" date="2006" name="Mol. Syst. Biol.">
        <title>Highly accurate genome sequences of Escherichia coli K-12 strains MG1655 and W3110.</title>
        <authorList>
            <person name="Hayashi K."/>
            <person name="Morooka N."/>
            <person name="Yamamoto Y."/>
            <person name="Fujita K."/>
            <person name="Isono K."/>
            <person name="Choi S."/>
            <person name="Ohtsubo E."/>
            <person name="Baba T."/>
            <person name="Wanner B.L."/>
            <person name="Mori H."/>
            <person name="Horiuchi T."/>
        </authorList>
    </citation>
    <scope>NUCLEOTIDE SEQUENCE [LARGE SCALE GENOMIC DNA]</scope>
    <source>
        <strain>K12 / W3110 / ATCC 27325 / DSM 5911</strain>
    </source>
</reference>
<comment type="catalytic activity">
    <reaction>
        <text>Transfers a segment of a (1-&gt;4)-alpha-D-glucan to a new position in an acceptor, which may be glucose or a (1-&gt;4)-alpha-D-glucan.</text>
        <dbReference type="EC" id="2.4.1.25"/>
    </reaction>
</comment>
<comment type="subcellular location">
    <subcellularLocation>
        <location>Cytoplasm</location>
    </subcellularLocation>
</comment>
<comment type="similarity">
    <text evidence="1">Belongs to the disproportionating enzyme family.</text>
</comment>
<accession>P15977</accession>
<accession>Q2M781</accession>
<name>MALQ_ECOLI</name>